<sequence length="176" mass="19339">MILSNDELKKLISLGKLKVDPLYPDAVRENGLDLRIGGEYAIYAYEGAVVRPCDLDDAKPLFRVVKADEVVIPPRNFVLLTTEEYVKMPEDVAGLANLRSTLARYGLSIPPTVVDVGFEGNITIEVVNNSPNTIVLKRGMRFLHLVLIKAEGRAAYRGAYQGQRGVTPPKGLKGEC</sequence>
<gene>
    <name evidence="1" type="primary">dcd</name>
    <name type="ordered locus">Pcal_1021</name>
</gene>
<feature type="chain" id="PRO_1000117988" description="dCTP deaminase">
    <location>
        <begin position="1"/>
        <end position="176"/>
    </location>
</feature>
<feature type="active site" description="Proton donor/acceptor" evidence="1">
    <location>
        <position position="125"/>
    </location>
</feature>
<feature type="binding site" evidence="1">
    <location>
        <begin position="99"/>
        <end position="104"/>
    </location>
    <ligand>
        <name>dCTP</name>
        <dbReference type="ChEBI" id="CHEBI:61481"/>
    </ligand>
</feature>
<feature type="binding site" evidence="1">
    <location>
        <position position="115"/>
    </location>
    <ligand>
        <name>dCTP</name>
        <dbReference type="ChEBI" id="CHEBI:61481"/>
    </ligand>
</feature>
<feature type="binding site" evidence="1">
    <location>
        <position position="163"/>
    </location>
    <ligand>
        <name>dCTP</name>
        <dbReference type="ChEBI" id="CHEBI:61481"/>
    </ligand>
</feature>
<protein>
    <recommendedName>
        <fullName evidence="1">dCTP deaminase</fullName>
        <ecNumber evidence="1">3.5.4.13</ecNumber>
    </recommendedName>
    <alternativeName>
        <fullName evidence="1">Deoxycytidine triphosphate deaminase</fullName>
    </alternativeName>
</protein>
<evidence type="ECO:0000255" key="1">
    <source>
        <dbReference type="HAMAP-Rule" id="MF_00146"/>
    </source>
</evidence>
<reference key="1">
    <citation type="submission" date="2007-02" db="EMBL/GenBank/DDBJ databases">
        <title>Complete sequence of Pyrobaculum calidifontis JCM 11548.</title>
        <authorList>
            <consortium name="US DOE Joint Genome Institute"/>
            <person name="Copeland A."/>
            <person name="Lucas S."/>
            <person name="Lapidus A."/>
            <person name="Barry K."/>
            <person name="Glavina del Rio T."/>
            <person name="Dalin E."/>
            <person name="Tice H."/>
            <person name="Pitluck S."/>
            <person name="Chain P."/>
            <person name="Malfatti S."/>
            <person name="Shin M."/>
            <person name="Vergez L."/>
            <person name="Schmutz J."/>
            <person name="Larimer F."/>
            <person name="Land M."/>
            <person name="Hauser L."/>
            <person name="Kyrpides N."/>
            <person name="Mikhailova N."/>
            <person name="Cozen A.E."/>
            <person name="Fitz-Gibbon S.T."/>
            <person name="House C.H."/>
            <person name="Saltikov C."/>
            <person name="Lowe T.M."/>
            <person name="Richardson P."/>
        </authorList>
    </citation>
    <scope>NUCLEOTIDE SEQUENCE [LARGE SCALE GENOMIC DNA]</scope>
    <source>
        <strain>DSM 21063 / JCM 11548 / VA1</strain>
    </source>
</reference>
<dbReference type="EC" id="3.5.4.13" evidence="1"/>
<dbReference type="EMBL" id="CP000561">
    <property type="protein sequence ID" value="ABO08446.1"/>
    <property type="molecule type" value="Genomic_DNA"/>
</dbReference>
<dbReference type="RefSeq" id="WP_011849704.1">
    <property type="nucleotide sequence ID" value="NC_009073.1"/>
</dbReference>
<dbReference type="SMR" id="A3MUX9"/>
<dbReference type="STRING" id="410359.Pcal_1021"/>
<dbReference type="GeneID" id="4908510"/>
<dbReference type="KEGG" id="pcl:Pcal_1021"/>
<dbReference type="eggNOG" id="arCOG04048">
    <property type="taxonomic scope" value="Archaea"/>
</dbReference>
<dbReference type="HOGENOM" id="CLU_087476_3_0_2"/>
<dbReference type="OrthoDB" id="33242at2157"/>
<dbReference type="UniPathway" id="UPA00610">
    <property type="reaction ID" value="UER00665"/>
</dbReference>
<dbReference type="Proteomes" id="UP000001431">
    <property type="component" value="Chromosome"/>
</dbReference>
<dbReference type="GO" id="GO:0008829">
    <property type="term" value="F:dCTP deaminase activity"/>
    <property type="evidence" value="ECO:0007669"/>
    <property type="project" value="UniProtKB-UniRule"/>
</dbReference>
<dbReference type="GO" id="GO:0000166">
    <property type="term" value="F:nucleotide binding"/>
    <property type="evidence" value="ECO:0007669"/>
    <property type="project" value="UniProtKB-KW"/>
</dbReference>
<dbReference type="GO" id="GO:0006226">
    <property type="term" value="P:dUMP biosynthetic process"/>
    <property type="evidence" value="ECO:0007669"/>
    <property type="project" value="UniProtKB-UniPathway"/>
</dbReference>
<dbReference type="GO" id="GO:0006229">
    <property type="term" value="P:dUTP biosynthetic process"/>
    <property type="evidence" value="ECO:0007669"/>
    <property type="project" value="UniProtKB-UniRule"/>
</dbReference>
<dbReference type="CDD" id="cd07557">
    <property type="entry name" value="trimeric_dUTPase"/>
    <property type="match status" value="1"/>
</dbReference>
<dbReference type="Gene3D" id="2.70.40.10">
    <property type="match status" value="1"/>
</dbReference>
<dbReference type="HAMAP" id="MF_00146">
    <property type="entry name" value="dCTP_deaminase"/>
    <property type="match status" value="1"/>
</dbReference>
<dbReference type="InterPro" id="IPR011962">
    <property type="entry name" value="dCTP_deaminase"/>
</dbReference>
<dbReference type="InterPro" id="IPR036157">
    <property type="entry name" value="dUTPase-like_sf"/>
</dbReference>
<dbReference type="InterPro" id="IPR033704">
    <property type="entry name" value="dUTPase_trimeric"/>
</dbReference>
<dbReference type="NCBIfam" id="TIGR02274">
    <property type="entry name" value="dCTP_deam"/>
    <property type="match status" value="1"/>
</dbReference>
<dbReference type="PANTHER" id="PTHR42680">
    <property type="entry name" value="DCTP DEAMINASE"/>
    <property type="match status" value="1"/>
</dbReference>
<dbReference type="PANTHER" id="PTHR42680:SF3">
    <property type="entry name" value="DCTP DEAMINASE"/>
    <property type="match status" value="1"/>
</dbReference>
<dbReference type="Pfam" id="PF22769">
    <property type="entry name" value="DCD"/>
    <property type="match status" value="1"/>
</dbReference>
<dbReference type="SUPFAM" id="SSF51283">
    <property type="entry name" value="dUTPase-like"/>
    <property type="match status" value="1"/>
</dbReference>
<organism>
    <name type="scientific">Pyrobaculum calidifontis (strain DSM 21063 / JCM 11548 / VA1)</name>
    <dbReference type="NCBI Taxonomy" id="410359"/>
    <lineage>
        <taxon>Archaea</taxon>
        <taxon>Thermoproteota</taxon>
        <taxon>Thermoprotei</taxon>
        <taxon>Thermoproteales</taxon>
        <taxon>Thermoproteaceae</taxon>
        <taxon>Pyrobaculum</taxon>
    </lineage>
</organism>
<keyword id="KW-0378">Hydrolase</keyword>
<keyword id="KW-0546">Nucleotide metabolism</keyword>
<keyword id="KW-0547">Nucleotide-binding</keyword>
<name>DCD_PYRCJ</name>
<accession>A3MUX9</accession>
<proteinExistence type="inferred from homology"/>
<comment type="function">
    <text evidence="1">Catalyzes the deamination of dCTP to dUTP.</text>
</comment>
<comment type="catalytic activity">
    <reaction evidence="1">
        <text>dCTP + H2O + H(+) = dUTP + NH4(+)</text>
        <dbReference type="Rhea" id="RHEA:22680"/>
        <dbReference type="ChEBI" id="CHEBI:15377"/>
        <dbReference type="ChEBI" id="CHEBI:15378"/>
        <dbReference type="ChEBI" id="CHEBI:28938"/>
        <dbReference type="ChEBI" id="CHEBI:61481"/>
        <dbReference type="ChEBI" id="CHEBI:61555"/>
        <dbReference type="EC" id="3.5.4.13"/>
    </reaction>
</comment>
<comment type="pathway">
    <text evidence="1">Pyrimidine metabolism; dUMP biosynthesis; dUMP from dCTP (dUTP route): step 1/2.</text>
</comment>
<comment type="subunit">
    <text evidence="1">Homotrimer.</text>
</comment>
<comment type="similarity">
    <text evidence="1">Belongs to the dCTP deaminase family.</text>
</comment>